<dbReference type="EC" id="2.1.1.-" evidence="1"/>
<dbReference type="EMBL" id="AE017332">
    <property type="protein sequence ID" value="AAV27665.1"/>
    <property type="molecule type" value="Genomic_DNA"/>
</dbReference>
<dbReference type="RefSeq" id="WP_011206507.1">
    <property type="nucleotide sequence ID" value="NC_006360.1"/>
</dbReference>
<dbReference type="SMR" id="Q5ZZN1"/>
<dbReference type="KEGG" id="mhy:mhp676"/>
<dbReference type="eggNOG" id="COG0357">
    <property type="taxonomic scope" value="Bacteria"/>
</dbReference>
<dbReference type="HOGENOM" id="CLU_065341_2_1_14"/>
<dbReference type="PhylomeDB" id="Q5ZZN1"/>
<dbReference type="Proteomes" id="UP000006822">
    <property type="component" value="Chromosome"/>
</dbReference>
<dbReference type="GO" id="GO:0005829">
    <property type="term" value="C:cytosol"/>
    <property type="evidence" value="ECO:0007669"/>
    <property type="project" value="TreeGrafter"/>
</dbReference>
<dbReference type="GO" id="GO:0070043">
    <property type="term" value="F:rRNA (guanine-N7-)-methyltransferase activity"/>
    <property type="evidence" value="ECO:0007669"/>
    <property type="project" value="UniProtKB-UniRule"/>
</dbReference>
<dbReference type="Gene3D" id="3.40.50.150">
    <property type="entry name" value="Vaccinia Virus protein VP39"/>
    <property type="match status" value="1"/>
</dbReference>
<dbReference type="HAMAP" id="MF_00074">
    <property type="entry name" value="16SrRNA_methyltr_G"/>
    <property type="match status" value="1"/>
</dbReference>
<dbReference type="InterPro" id="IPR003682">
    <property type="entry name" value="rRNA_ssu_MeTfrase_G"/>
</dbReference>
<dbReference type="InterPro" id="IPR029063">
    <property type="entry name" value="SAM-dependent_MTases_sf"/>
</dbReference>
<dbReference type="NCBIfam" id="TIGR00138">
    <property type="entry name" value="rsmG_gidB"/>
    <property type="match status" value="1"/>
</dbReference>
<dbReference type="PANTHER" id="PTHR31760">
    <property type="entry name" value="S-ADENOSYL-L-METHIONINE-DEPENDENT METHYLTRANSFERASES SUPERFAMILY PROTEIN"/>
    <property type="match status" value="1"/>
</dbReference>
<dbReference type="PANTHER" id="PTHR31760:SF0">
    <property type="entry name" value="S-ADENOSYL-L-METHIONINE-DEPENDENT METHYLTRANSFERASES SUPERFAMILY PROTEIN"/>
    <property type="match status" value="1"/>
</dbReference>
<dbReference type="Pfam" id="PF02527">
    <property type="entry name" value="GidB"/>
    <property type="match status" value="1"/>
</dbReference>
<dbReference type="PIRSF" id="PIRSF003078">
    <property type="entry name" value="GidB"/>
    <property type="match status" value="1"/>
</dbReference>
<dbReference type="SUPFAM" id="SSF53335">
    <property type="entry name" value="S-adenosyl-L-methionine-dependent methyltransferases"/>
    <property type="match status" value="1"/>
</dbReference>
<reference key="1">
    <citation type="journal article" date="2004" name="J. Bacteriol.">
        <title>The genome sequence of Mycoplasma hyopneumoniae strain 232, the agent of swine mycoplasmosis.</title>
        <authorList>
            <person name="Minion F.C."/>
            <person name="Lefkowitz E.J."/>
            <person name="Madsen M.L."/>
            <person name="Cleary B.J."/>
            <person name="Swartzell S.M."/>
            <person name="Mahairas G.G."/>
        </authorList>
    </citation>
    <scope>NUCLEOTIDE SEQUENCE [LARGE SCALE GENOMIC DNA]</scope>
    <source>
        <strain>232</strain>
    </source>
</reference>
<protein>
    <recommendedName>
        <fullName evidence="1">Ribosomal RNA small subunit methyltransferase G</fullName>
        <ecNumber evidence="1">2.1.1.-</ecNumber>
    </recommendedName>
    <alternativeName>
        <fullName evidence="1">16S rRNA 7-methylguanosine methyltransferase</fullName>
        <shortName evidence="1">16S rRNA m7G methyltransferase</shortName>
    </alternativeName>
</protein>
<keyword id="KW-0963">Cytoplasm</keyword>
<keyword id="KW-0489">Methyltransferase</keyword>
<keyword id="KW-0698">rRNA processing</keyword>
<keyword id="KW-0949">S-adenosyl-L-methionine</keyword>
<keyword id="KW-0808">Transferase</keyword>
<organism>
    <name type="scientific">Mesomycoplasma hyopneumoniae (strain 232)</name>
    <name type="common">Mycoplasma hyopneumoniae</name>
    <dbReference type="NCBI Taxonomy" id="295358"/>
    <lineage>
        <taxon>Bacteria</taxon>
        <taxon>Bacillati</taxon>
        <taxon>Mycoplasmatota</taxon>
        <taxon>Mycoplasmoidales</taxon>
        <taxon>Metamycoplasmataceae</taxon>
        <taxon>Mesomycoplasma</taxon>
    </lineage>
</organism>
<comment type="function">
    <text evidence="1">Specifically methylates the N7 position of a guanine in 16S rRNA.</text>
</comment>
<comment type="subcellular location">
    <subcellularLocation>
        <location evidence="1">Cytoplasm</location>
    </subcellularLocation>
</comment>
<comment type="similarity">
    <text evidence="1">Belongs to the methyltransferase superfamily. RNA methyltransferase RsmG family.</text>
</comment>
<gene>
    <name evidence="1" type="primary">rsmG</name>
    <name type="ordered locus">mhp676</name>
</gene>
<sequence>MYKRLVQEFFPKLDFENLEKYVNLIEFSNKNFNLTAFSGDILWKEGIFESIFTMNFIVGLVNNKENKKLKILDIGAGSGFPSIPFLITNPEIELTISESMQKRCQFLKDISEKLDLKFNLICKPVQEINPQKFDIITARAVANLEKLEKITKKIHFPKTLLAFIKGPKVFNEVQNCKNCNYKIIKVNNNINKKIFIAFKQVS</sequence>
<proteinExistence type="inferred from homology"/>
<name>RSMG_MESH2</name>
<evidence type="ECO:0000255" key="1">
    <source>
        <dbReference type="HAMAP-Rule" id="MF_00074"/>
    </source>
</evidence>
<feature type="chain" id="PRO_0000342928" description="Ribosomal RNA small subunit methyltransferase G">
    <location>
        <begin position="1"/>
        <end position="202"/>
    </location>
</feature>
<feature type="binding site" evidence="1">
    <location>
        <position position="75"/>
    </location>
    <ligand>
        <name>S-adenosyl-L-methionine</name>
        <dbReference type="ChEBI" id="CHEBI:59789"/>
    </ligand>
</feature>
<feature type="binding site" evidence="1">
    <location>
        <position position="80"/>
    </location>
    <ligand>
        <name>S-adenosyl-L-methionine</name>
        <dbReference type="ChEBI" id="CHEBI:59789"/>
    </ligand>
</feature>
<feature type="binding site" evidence="1">
    <location>
        <begin position="125"/>
        <end position="126"/>
    </location>
    <ligand>
        <name>S-adenosyl-L-methionine</name>
        <dbReference type="ChEBI" id="CHEBI:59789"/>
    </ligand>
</feature>
<feature type="binding site" evidence="1">
    <location>
        <position position="139"/>
    </location>
    <ligand>
        <name>S-adenosyl-L-methionine</name>
        <dbReference type="ChEBI" id="CHEBI:59789"/>
    </ligand>
</feature>
<accession>Q5ZZN1</accession>